<sequence>GAGGALFVHRD</sequence>
<feature type="chain" id="PRO_0000118684" description="NADH dehydrogenase [ubiquinone] flavoprotein 2">
    <location>
        <begin position="1"/>
        <end position="11" status="greater than"/>
    </location>
</feature>
<feature type="non-terminal residue">
    <location>
        <position position="11"/>
    </location>
</feature>
<comment type="function">
    <text evidence="1">Core subunit of the mitochondrial membrane respiratory chain NADH dehydrogenase (Complex I) which catalyzes electron transfer from NADH through the respiratory chain, using ubiquinone as an electron acceptor.</text>
</comment>
<comment type="catalytic activity">
    <reaction>
        <text>a ubiquinone + NADH + 5 H(+)(in) = a ubiquinol + NAD(+) + 4 H(+)(out)</text>
        <dbReference type="Rhea" id="RHEA:29091"/>
        <dbReference type="Rhea" id="RHEA-COMP:9565"/>
        <dbReference type="Rhea" id="RHEA-COMP:9566"/>
        <dbReference type="ChEBI" id="CHEBI:15378"/>
        <dbReference type="ChEBI" id="CHEBI:16389"/>
        <dbReference type="ChEBI" id="CHEBI:17976"/>
        <dbReference type="ChEBI" id="CHEBI:57540"/>
        <dbReference type="ChEBI" id="CHEBI:57945"/>
        <dbReference type="EC" id="7.1.1.2"/>
    </reaction>
</comment>
<comment type="cofactor">
    <cofactor evidence="2">
        <name>[2Fe-2S] cluster</name>
        <dbReference type="ChEBI" id="CHEBI:190135"/>
    </cofactor>
    <text evidence="2">Binds 1 [2Fe-2S] cluster.</text>
</comment>
<comment type="subunit">
    <text evidence="1">Core subunit of respiratory chain NADH dehydrogenase (Complex I) which is composed of 45 different subunits. This is a component of the flavoprotein-sulfur (FP) fragment of the enzyme (By similarity).</text>
</comment>
<comment type="subcellular location">
    <subcellularLocation>
        <location evidence="1">Mitochondrion inner membrane</location>
        <topology evidence="1">Peripheral membrane protein</topology>
        <orientation evidence="1">Matrix side</orientation>
    </subcellularLocation>
</comment>
<comment type="similarity">
    <text evidence="2">Belongs to the complex I 24 kDa subunit family.</text>
</comment>
<gene>
    <name type="primary">NDUFV2</name>
</gene>
<evidence type="ECO:0000250" key="1">
    <source>
        <dbReference type="UniProtKB" id="P04394"/>
    </source>
</evidence>
<evidence type="ECO:0000305" key="2"/>
<protein>
    <recommendedName>
        <fullName>NADH dehydrogenase [ubiquinone] flavoprotein 2</fullName>
        <ecNumber>7.1.1.2</ecNumber>
    </recommendedName>
    <alternativeName>
        <fullName>NADH-ubiquinone oxidoreductase 24 kDa subunit</fullName>
    </alternativeName>
</protein>
<organism>
    <name type="scientific">Canis lupus familiaris</name>
    <name type="common">Dog</name>
    <name type="synonym">Canis familiaris</name>
    <dbReference type="NCBI Taxonomy" id="9615"/>
    <lineage>
        <taxon>Eukaryota</taxon>
        <taxon>Metazoa</taxon>
        <taxon>Chordata</taxon>
        <taxon>Craniata</taxon>
        <taxon>Vertebrata</taxon>
        <taxon>Euteleostomi</taxon>
        <taxon>Mammalia</taxon>
        <taxon>Eutheria</taxon>
        <taxon>Laurasiatheria</taxon>
        <taxon>Carnivora</taxon>
        <taxon>Caniformia</taxon>
        <taxon>Canidae</taxon>
        <taxon>Canis</taxon>
    </lineage>
</organism>
<proteinExistence type="evidence at protein level"/>
<keyword id="KW-0001">2Fe-2S</keyword>
<keyword id="KW-0903">Direct protein sequencing</keyword>
<keyword id="KW-0249">Electron transport</keyword>
<keyword id="KW-0408">Iron</keyword>
<keyword id="KW-0411">Iron-sulfur</keyword>
<keyword id="KW-0472">Membrane</keyword>
<keyword id="KW-0479">Metal-binding</keyword>
<keyword id="KW-0496">Mitochondrion</keyword>
<keyword id="KW-0999">Mitochondrion inner membrane</keyword>
<keyword id="KW-0520">NAD</keyword>
<keyword id="KW-0560">Oxidoreductase</keyword>
<keyword id="KW-1185">Reference proteome</keyword>
<keyword id="KW-0679">Respiratory chain</keyword>
<keyword id="KW-1278">Translocase</keyword>
<keyword id="KW-0813">Transport</keyword>
<keyword id="KW-0830">Ubiquinone</keyword>
<dbReference type="EC" id="7.1.1.2"/>
<dbReference type="FunCoup" id="P49820">
    <property type="interactions" value="1681"/>
</dbReference>
<dbReference type="SwissPalm" id="P49820"/>
<dbReference type="InParanoid" id="P49820"/>
<dbReference type="OrthoDB" id="10254187at2759"/>
<dbReference type="Proteomes" id="UP000002254">
    <property type="component" value="Unplaced"/>
</dbReference>
<dbReference type="Proteomes" id="UP000694429">
    <property type="component" value="Unplaced"/>
</dbReference>
<dbReference type="Proteomes" id="UP000694542">
    <property type="component" value="Unplaced"/>
</dbReference>
<dbReference type="Proteomes" id="UP000805418">
    <property type="component" value="Unplaced"/>
</dbReference>
<dbReference type="GO" id="GO:0005743">
    <property type="term" value="C:mitochondrial inner membrane"/>
    <property type="evidence" value="ECO:0000250"/>
    <property type="project" value="UniProtKB"/>
</dbReference>
<dbReference type="GO" id="GO:0051537">
    <property type="term" value="F:2 iron, 2 sulfur cluster binding"/>
    <property type="evidence" value="ECO:0007669"/>
    <property type="project" value="UniProtKB-KW"/>
</dbReference>
<dbReference type="GO" id="GO:0046872">
    <property type="term" value="F:metal ion binding"/>
    <property type="evidence" value="ECO:0007669"/>
    <property type="project" value="UniProtKB-KW"/>
</dbReference>
<dbReference type="GO" id="GO:0008137">
    <property type="term" value="F:NADH dehydrogenase (ubiquinone) activity"/>
    <property type="evidence" value="ECO:0007669"/>
    <property type="project" value="UniProtKB-EC"/>
</dbReference>
<accession>P49820</accession>
<name>NDUV2_CANLF</name>
<reference key="1">
    <citation type="journal article" date="1997" name="Electrophoresis">
        <title>HSC-2DPAGE and the two-dimensional gel electrophoresis database of dog heart proteins.</title>
        <authorList>
            <person name="Dunn M.J."/>
            <person name="Corbett J.M."/>
            <person name="Wheeler C.H."/>
        </authorList>
    </citation>
    <scope>PROTEIN SEQUENCE</scope>
    <source>
        <tissue>Heart</tissue>
    </source>
</reference>